<proteinExistence type="inferred from homology"/>
<name>RODZ_ESCF3</name>
<keyword id="KW-0997">Cell inner membrane</keyword>
<keyword id="KW-1003">Cell membrane</keyword>
<keyword id="KW-0133">Cell shape</keyword>
<keyword id="KW-0238">DNA-binding</keyword>
<keyword id="KW-0472">Membrane</keyword>
<keyword id="KW-0735">Signal-anchor</keyword>
<keyword id="KW-0812">Transmembrane</keyword>
<keyword id="KW-1133">Transmembrane helix</keyword>
<evidence type="ECO:0000255" key="1">
    <source>
        <dbReference type="HAMAP-Rule" id="MF_02017"/>
    </source>
</evidence>
<evidence type="ECO:0000256" key="2">
    <source>
        <dbReference type="SAM" id="MobiDB-lite"/>
    </source>
</evidence>
<protein>
    <recommendedName>
        <fullName evidence="1">Cytoskeleton protein RodZ</fullName>
    </recommendedName>
</protein>
<comment type="function">
    <text evidence="1">Cytoskeletal protein that is involved in cell-shape control through regulation of the length of the long axis.</text>
</comment>
<comment type="subcellular location">
    <subcellularLocation>
        <location evidence="1">Cell inner membrane</location>
        <topology evidence="1">Single-pass type II membrane protein</topology>
    </subcellularLocation>
    <text evidence="1">Forms helical filaments along the long axis of the cell.</text>
</comment>
<comment type="domain">
    <text evidence="1">The helix-turn-helix (HTH) motif in the cytoplasmic domain of the N-terminus is involved in the formation of spirals to maintain the rigid rod shape. As this protein is anchored in the cytoplasmic membrane, the HTH motif may contribute to protein-protein interactions to form the RodZ helix, which is localized beneath the cytoplasmic membrane. The C-terminal domain may be critical for determination of the rod shape by probably interacting with enzymes required for synthesis of the peptidoglycan layer, including PBPs in the periplasm.</text>
</comment>
<comment type="similarity">
    <text evidence="1">Belongs to the RodZ family.</text>
</comment>
<feature type="chain" id="PRO_1000189544" description="Cytoskeleton protein RodZ">
    <location>
        <begin position="1"/>
        <end position="338"/>
    </location>
</feature>
<feature type="topological domain" description="Cytoplasmic" evidence="1">
    <location>
        <begin position="1"/>
        <end position="111"/>
    </location>
</feature>
<feature type="transmembrane region" description="Helical; Signal-anchor for type II membrane protein" evidence="1">
    <location>
        <begin position="112"/>
        <end position="132"/>
    </location>
</feature>
<feature type="topological domain" description="Periplasmic" evidence="1">
    <location>
        <begin position="133"/>
        <end position="338"/>
    </location>
</feature>
<feature type="domain" description="HTH cro/C1-type" evidence="1">
    <location>
        <begin position="19"/>
        <end position="71"/>
    </location>
</feature>
<feature type="DNA-binding region" description="H-T-H motif" evidence="1">
    <location>
        <begin position="30"/>
        <end position="49"/>
    </location>
</feature>
<feature type="region of interest" description="Disordered" evidence="2">
    <location>
        <begin position="155"/>
        <end position="240"/>
    </location>
</feature>
<feature type="compositionally biased region" description="Polar residues" evidence="2">
    <location>
        <begin position="155"/>
        <end position="169"/>
    </location>
</feature>
<feature type="compositionally biased region" description="Low complexity" evidence="2">
    <location>
        <begin position="170"/>
        <end position="188"/>
    </location>
</feature>
<feature type="compositionally biased region" description="Polar residues" evidence="2">
    <location>
        <begin position="203"/>
        <end position="217"/>
    </location>
</feature>
<feature type="compositionally biased region" description="Low complexity" evidence="2">
    <location>
        <begin position="218"/>
        <end position="240"/>
    </location>
</feature>
<organism>
    <name type="scientific">Escherichia fergusonii (strain ATCC 35469 / DSM 13698 / CCUG 18766 / IAM 14443 / JCM 21226 / LMG 7866 / NBRC 102419 / NCTC 12128 / CDC 0568-73)</name>
    <dbReference type="NCBI Taxonomy" id="585054"/>
    <lineage>
        <taxon>Bacteria</taxon>
        <taxon>Pseudomonadati</taxon>
        <taxon>Pseudomonadota</taxon>
        <taxon>Gammaproteobacteria</taxon>
        <taxon>Enterobacterales</taxon>
        <taxon>Enterobacteriaceae</taxon>
        <taxon>Escherichia</taxon>
    </lineage>
</organism>
<reference key="1">
    <citation type="journal article" date="2009" name="PLoS Genet.">
        <title>Organised genome dynamics in the Escherichia coli species results in highly diverse adaptive paths.</title>
        <authorList>
            <person name="Touchon M."/>
            <person name="Hoede C."/>
            <person name="Tenaillon O."/>
            <person name="Barbe V."/>
            <person name="Baeriswyl S."/>
            <person name="Bidet P."/>
            <person name="Bingen E."/>
            <person name="Bonacorsi S."/>
            <person name="Bouchier C."/>
            <person name="Bouvet O."/>
            <person name="Calteau A."/>
            <person name="Chiapello H."/>
            <person name="Clermont O."/>
            <person name="Cruveiller S."/>
            <person name="Danchin A."/>
            <person name="Diard M."/>
            <person name="Dossat C."/>
            <person name="Karoui M.E."/>
            <person name="Frapy E."/>
            <person name="Garry L."/>
            <person name="Ghigo J.M."/>
            <person name="Gilles A.M."/>
            <person name="Johnson J."/>
            <person name="Le Bouguenec C."/>
            <person name="Lescat M."/>
            <person name="Mangenot S."/>
            <person name="Martinez-Jehanne V."/>
            <person name="Matic I."/>
            <person name="Nassif X."/>
            <person name="Oztas S."/>
            <person name="Petit M.A."/>
            <person name="Pichon C."/>
            <person name="Rouy Z."/>
            <person name="Ruf C.S."/>
            <person name="Schneider D."/>
            <person name="Tourret J."/>
            <person name="Vacherie B."/>
            <person name="Vallenet D."/>
            <person name="Medigue C."/>
            <person name="Rocha E.P.C."/>
            <person name="Denamur E."/>
        </authorList>
    </citation>
    <scope>NUCLEOTIDE SEQUENCE [LARGE SCALE GENOMIC DNA]</scope>
    <source>
        <strain>ATCC 35469 / DSM 13698 / BCRC 15582 / CCUG 18766 / IAM 14443 / JCM 21226 / LMG 7866 / NBRC 102419 / NCTC 12128 / CDC 0568-73</strain>
    </source>
</reference>
<accession>B7LKC2</accession>
<dbReference type="EMBL" id="CU928158">
    <property type="protein sequence ID" value="CAQ88199.1"/>
    <property type="molecule type" value="Genomic_DNA"/>
</dbReference>
<dbReference type="RefSeq" id="WP_001090875.1">
    <property type="nucleotide sequence ID" value="NC_011740.1"/>
</dbReference>
<dbReference type="SMR" id="B7LKC2"/>
<dbReference type="GeneID" id="75058284"/>
<dbReference type="KEGG" id="efe:EFER_0656"/>
<dbReference type="HOGENOM" id="CLU_047530_3_1_6"/>
<dbReference type="OrthoDB" id="9790252at2"/>
<dbReference type="Proteomes" id="UP000000745">
    <property type="component" value="Chromosome"/>
</dbReference>
<dbReference type="GO" id="GO:0005886">
    <property type="term" value="C:plasma membrane"/>
    <property type="evidence" value="ECO:0007669"/>
    <property type="project" value="UniProtKB-SubCell"/>
</dbReference>
<dbReference type="GO" id="GO:0003677">
    <property type="term" value="F:DNA binding"/>
    <property type="evidence" value="ECO:0007669"/>
    <property type="project" value="UniProtKB-KW"/>
</dbReference>
<dbReference type="GO" id="GO:0008360">
    <property type="term" value="P:regulation of cell shape"/>
    <property type="evidence" value="ECO:0007669"/>
    <property type="project" value="UniProtKB-UniRule"/>
</dbReference>
<dbReference type="CDD" id="cd00093">
    <property type="entry name" value="HTH_XRE"/>
    <property type="match status" value="1"/>
</dbReference>
<dbReference type="FunFam" id="1.10.260.40:FF:000014">
    <property type="entry name" value="Cytoskeleton protein RodZ"/>
    <property type="match status" value="1"/>
</dbReference>
<dbReference type="Gene3D" id="1.10.260.40">
    <property type="entry name" value="lambda repressor-like DNA-binding domains"/>
    <property type="match status" value="1"/>
</dbReference>
<dbReference type="HAMAP" id="MF_02017">
    <property type="entry name" value="RodZ"/>
    <property type="match status" value="1"/>
</dbReference>
<dbReference type="InterPro" id="IPR050400">
    <property type="entry name" value="Bact_Cytoskel_RodZ"/>
</dbReference>
<dbReference type="InterPro" id="IPR001387">
    <property type="entry name" value="Cro/C1-type_HTH"/>
</dbReference>
<dbReference type="InterPro" id="IPR010982">
    <property type="entry name" value="Lambda_DNA-bd_dom_sf"/>
</dbReference>
<dbReference type="InterPro" id="IPR023690">
    <property type="entry name" value="RodZ"/>
</dbReference>
<dbReference type="InterPro" id="IPR025194">
    <property type="entry name" value="RodZ-like_C"/>
</dbReference>
<dbReference type="NCBIfam" id="NF008109">
    <property type="entry name" value="PRK10856.1"/>
    <property type="match status" value="1"/>
</dbReference>
<dbReference type="PANTHER" id="PTHR34475">
    <property type="match status" value="1"/>
</dbReference>
<dbReference type="PANTHER" id="PTHR34475:SF1">
    <property type="entry name" value="CYTOSKELETON PROTEIN RODZ"/>
    <property type="match status" value="1"/>
</dbReference>
<dbReference type="Pfam" id="PF13413">
    <property type="entry name" value="HTH_25"/>
    <property type="match status" value="1"/>
</dbReference>
<dbReference type="Pfam" id="PF13464">
    <property type="entry name" value="RodZ_C"/>
    <property type="match status" value="1"/>
</dbReference>
<dbReference type="SMART" id="SM00530">
    <property type="entry name" value="HTH_XRE"/>
    <property type="match status" value="1"/>
</dbReference>
<dbReference type="SUPFAM" id="SSF47413">
    <property type="entry name" value="lambda repressor-like DNA-binding domains"/>
    <property type="match status" value="1"/>
</dbReference>
<dbReference type="PROSITE" id="PS50943">
    <property type="entry name" value="HTH_CROC1"/>
    <property type="match status" value="1"/>
</dbReference>
<sequence>MNTEATHDQNEALTTGVRLRNAREQLGLSQQAVAERLCLKVSTVRDIEEDKAPADLASTFLRGYIRSYARLVHIPEEELLPGLEKQAPLRAAKVAPMQSFSLGKRRKKRDGWLMTFTWLVLFVVIGLSGAWWWQDHKAQQEEITTMADQSSAELNANGTNSQSIPLENSTTTVPEATPAPAAPVDTTANEQTPAASTPAPVTEPQQNAVVPPSQANVDTATTAPAAPATTTTPDTATPLPTDQAGVTTPAADPNALVMNFTADCWLEVTDATGKKLFSGMQRKDGNLNLTGQAPYKLKIGAPAAVQIQYQGKPVDLSRFIRTNQVARLTLNAEQSPAQ</sequence>
<gene>
    <name evidence="1" type="primary">rodZ</name>
    <name type="ordered locus">EFER_0656</name>
</gene>